<keyword id="KW-0002">3D-structure</keyword>
<keyword id="KW-0153">Cholesterol metabolism</keyword>
<keyword id="KW-0903">Direct protein sequencing</keyword>
<keyword id="KW-1015">Disulfide bond</keyword>
<keyword id="KW-0325">Glycoprotein</keyword>
<keyword id="KW-0378">Hydrolase</keyword>
<keyword id="KW-0442">Lipid degradation</keyword>
<keyword id="KW-0443">Lipid metabolism</keyword>
<keyword id="KW-0732">Signal</keyword>
<keyword id="KW-0753">Steroid metabolism</keyword>
<keyword id="KW-1207">Sterol metabolism</keyword>
<gene>
    <name type="primary">LIP3</name>
</gene>
<dbReference type="EC" id="3.1.1.3"/>
<dbReference type="EMBL" id="X66006">
    <property type="protein sequence ID" value="CAA46805.1"/>
    <property type="molecule type" value="Genomic_DNA"/>
</dbReference>
<dbReference type="PIR" id="JN0551">
    <property type="entry name" value="JN0551"/>
</dbReference>
<dbReference type="PIR" id="S41735">
    <property type="entry name" value="S41735"/>
</dbReference>
<dbReference type="PDB" id="1CLE">
    <property type="method" value="X-ray"/>
    <property type="resolution" value="2.00 A"/>
    <property type="chains" value="A/B=16-549"/>
</dbReference>
<dbReference type="PDB" id="1LLF">
    <property type="method" value="X-ray"/>
    <property type="resolution" value="1.40 A"/>
    <property type="chains" value="A/B=16-549"/>
</dbReference>
<dbReference type="PDBsum" id="1CLE"/>
<dbReference type="PDBsum" id="1LLF"/>
<dbReference type="SMR" id="P32947"/>
<dbReference type="DrugBank" id="DB02092">
    <property type="generic name" value="Cholesteryl Linoleate"/>
</dbReference>
<dbReference type="DrugBank" id="DB03500">
    <property type="generic name" value="Tricosanoic acid"/>
</dbReference>
<dbReference type="ESTHER" id="canru-3lipa">
    <property type="family name" value="Fungal_carboxylesterase_lipase"/>
</dbReference>
<dbReference type="GlyCosmos" id="P32947">
    <property type="glycosylation" value="2 sites, No reported glycans"/>
</dbReference>
<dbReference type="BRENDA" id="3.1.1.3">
    <property type="organism ID" value="1139"/>
</dbReference>
<dbReference type="EvolutionaryTrace" id="P32947"/>
<dbReference type="GO" id="GO:0004806">
    <property type="term" value="F:triacylglycerol lipase activity"/>
    <property type="evidence" value="ECO:0007669"/>
    <property type="project" value="UniProtKB-EC"/>
</dbReference>
<dbReference type="GO" id="GO:0008203">
    <property type="term" value="P:cholesterol metabolic process"/>
    <property type="evidence" value="ECO:0007669"/>
    <property type="project" value="UniProtKB-KW"/>
</dbReference>
<dbReference type="GO" id="GO:0016042">
    <property type="term" value="P:lipid catabolic process"/>
    <property type="evidence" value="ECO:0007669"/>
    <property type="project" value="UniProtKB-KW"/>
</dbReference>
<dbReference type="CDD" id="cd00312">
    <property type="entry name" value="Esterase_lipase"/>
    <property type="match status" value="1"/>
</dbReference>
<dbReference type="Gene3D" id="3.40.50.1820">
    <property type="entry name" value="alpha/beta hydrolase"/>
    <property type="match status" value="1"/>
</dbReference>
<dbReference type="InterPro" id="IPR029058">
    <property type="entry name" value="AB_hydrolase_fold"/>
</dbReference>
<dbReference type="InterPro" id="IPR002018">
    <property type="entry name" value="CarbesteraseB"/>
</dbReference>
<dbReference type="InterPro" id="IPR019826">
    <property type="entry name" value="Carboxylesterase_B_AS"/>
</dbReference>
<dbReference type="InterPro" id="IPR019819">
    <property type="entry name" value="Carboxylesterase_B_CS"/>
</dbReference>
<dbReference type="InterPro" id="IPR050309">
    <property type="entry name" value="Type-B_Carboxylest/Lipase"/>
</dbReference>
<dbReference type="PANTHER" id="PTHR11559">
    <property type="entry name" value="CARBOXYLESTERASE"/>
    <property type="match status" value="1"/>
</dbReference>
<dbReference type="Pfam" id="PF00135">
    <property type="entry name" value="COesterase"/>
    <property type="match status" value="1"/>
</dbReference>
<dbReference type="SUPFAM" id="SSF53474">
    <property type="entry name" value="alpha/beta-Hydrolases"/>
    <property type="match status" value="1"/>
</dbReference>
<dbReference type="PROSITE" id="PS00122">
    <property type="entry name" value="CARBOXYLESTERASE_B_1"/>
    <property type="match status" value="1"/>
</dbReference>
<dbReference type="PROSITE" id="PS00941">
    <property type="entry name" value="CARBOXYLESTERASE_B_2"/>
    <property type="match status" value="1"/>
</dbReference>
<reference key="1">
    <citation type="journal article" date="1993" name="Gene">
        <title>Cloning and analysis of Candida cylindracea lipase sequences.</title>
        <authorList>
            <person name="Lotti M."/>
            <person name="Grandori R."/>
            <person name="Fusetti F."/>
            <person name="Longhi S."/>
            <person name="Brocca S."/>
            <person name="Tramontano A."/>
            <person name="Alberghina L."/>
        </authorList>
    </citation>
    <scope>NUCLEOTIDE SEQUENCE [GENOMIC DNA]</scope>
    <source>
        <strain>ATCC 14830 / CBS 6330 / DSM 2031 / MS-5 / NRRL Y-17506</strain>
    </source>
</reference>
<reference key="2">
    <citation type="journal article" date="1994" name="FEBS Lett.">
        <title>Monomeric and dimeric forms of cholesterol esterase from Candida cylindracea. Primary structure, identity in peptide patterns, and additional microheterogeneity.</title>
        <authorList>
            <person name="Kaiser R."/>
            <person name="Erman M."/>
            <person name="Duax W.L."/>
            <person name="Ghosh D."/>
            <person name="Joernvall H."/>
        </authorList>
    </citation>
    <scope>PROTEIN SEQUENCE OF 16-549</scope>
    <scope>SUBUNIT STRUCTURE</scope>
</reference>
<reference key="3">
    <citation type="journal article" date="1995" name="Structure">
        <title>Structure of uncomplexed and linoleate-bound Candida cylindracea cholesterol esterase.</title>
        <authorList>
            <person name="Ghosh D."/>
            <person name="Wawrzak Z."/>
            <person name="Pletnev V.Z."/>
            <person name="Li N."/>
            <person name="Kaiser R."/>
            <person name="Pangborn W."/>
            <person name="Joernvall H."/>
            <person name="Erman M."/>
            <person name="Duax W.L."/>
        </authorList>
    </citation>
    <scope>X-RAY CRYSTALLOGRAPHY (2.0 ANGSTROMS)</scope>
</reference>
<reference key="4">
    <citation type="journal article" date="1998" name="Yeast">
        <title>Candida rugosa lipases: molecular biology and versatility in biotechnology.</title>
        <authorList>
            <person name="Benjamin S."/>
            <person name="Pandey A."/>
        </authorList>
    </citation>
    <scope>REVIEW</scope>
</reference>
<name>LIP3_DIURU</name>
<protein>
    <recommendedName>
        <fullName>Lipase 3</fullName>
        <ecNumber>3.1.1.3</ecNumber>
    </recommendedName>
    <alternativeName>
        <fullName>Cholesterol esterase</fullName>
    </alternativeName>
</protein>
<comment type="catalytic activity">
    <reaction>
        <text>a triacylglycerol + H2O = a diacylglycerol + a fatty acid + H(+)</text>
        <dbReference type="Rhea" id="RHEA:12044"/>
        <dbReference type="ChEBI" id="CHEBI:15377"/>
        <dbReference type="ChEBI" id="CHEBI:15378"/>
        <dbReference type="ChEBI" id="CHEBI:17855"/>
        <dbReference type="ChEBI" id="CHEBI:18035"/>
        <dbReference type="ChEBI" id="CHEBI:28868"/>
        <dbReference type="EC" id="3.1.1.3"/>
    </reaction>
</comment>
<comment type="subunit">
    <text evidence="4">Monomer and homodimer.</text>
</comment>
<comment type="similarity">
    <text evidence="5">Belongs to the type-B carboxylesterase/lipase family.</text>
</comment>
<sequence>MKLALALSLIASVAAAPTAKLANGDTITGLNAIINEAFLGIPFAEPPVGNLRFKDPVPYSGSLNGQKFTSYGPSCMQQNPEGTFEENLGKTALDLVMQSKVFQAVLPQSEDCLTINVVRPPGTKAGANLPVMLWIFGGGFEIGSPTIFPPAQMVTKSVLMGKPIIHVAVNYRVASWGFLAGDDIKAEGSGNAGLKDQRLGMQWVADNIAGFGGDPSKVTIFGESAGSMSVLCHLIWNDGDNTYKGKPLFRAGIMQSGAMVPSDPVDGTYGNEIYDLFVSSAGCGSASDKLACLRSASSDTLLDATNNTPGFLAYSSLRLSYLPRPDGKNITDDMYKLVRDGKYASVPVIIGDQNDEGTIFGLSSLNVTTNAQARAYFKQSFIHASDAEIDTLMAAYPQDITQGSPFDTGIFNAITPQFKRISAVLGDLAFIHARRYFLNHFQGGTKYSFLSKQLSGLPIMGTFHANDIVWQDYLLGSGSVIYNNAFIAFATDLDPNTAGLLVNWPKYTSSSQSGNNLMMINALGLYTGKDNFRTAGYDALMTNPSSFFV</sequence>
<proteinExistence type="evidence at protein level"/>
<accession>P32947</accession>
<evidence type="ECO:0000250" key="1"/>
<evidence type="ECO:0000255" key="2"/>
<evidence type="ECO:0000255" key="3">
    <source>
        <dbReference type="PROSITE-ProRule" id="PRU10039"/>
    </source>
</evidence>
<evidence type="ECO:0000269" key="4">
    <source>
    </source>
</evidence>
<evidence type="ECO:0000305" key="5"/>
<evidence type="ECO:0007829" key="6">
    <source>
        <dbReference type="PDB" id="1CLE"/>
    </source>
</evidence>
<feature type="signal peptide" evidence="4">
    <location>
        <begin position="1"/>
        <end position="15"/>
    </location>
</feature>
<feature type="chain" id="PRO_0000008621" description="Lipase 3">
    <location>
        <begin position="16"/>
        <end position="549"/>
    </location>
</feature>
<feature type="active site" description="Acyl-ester intermediate" evidence="3">
    <location>
        <position position="224"/>
    </location>
</feature>
<feature type="active site" description="Charge relay system" evidence="1">
    <location>
        <position position="356"/>
    </location>
</feature>
<feature type="active site" description="Charge relay system" evidence="1">
    <location>
        <position position="464"/>
    </location>
</feature>
<feature type="glycosylation site" description="N-linked (GlcNAc...) asparagine" evidence="2">
    <location>
        <position position="329"/>
    </location>
</feature>
<feature type="glycosylation site" description="N-linked (GlcNAc...) asparagine" evidence="2">
    <location>
        <position position="366"/>
    </location>
</feature>
<feature type="disulfide bond" evidence="1">
    <location>
        <begin position="75"/>
        <end position="112"/>
    </location>
</feature>
<feature type="disulfide bond" evidence="1">
    <location>
        <begin position="283"/>
        <end position="292"/>
    </location>
</feature>
<feature type="strand" evidence="6">
    <location>
        <begin position="18"/>
        <end position="20"/>
    </location>
</feature>
<feature type="strand" evidence="6">
    <location>
        <begin position="26"/>
        <end position="28"/>
    </location>
</feature>
<feature type="strand" evidence="6">
    <location>
        <begin position="36"/>
        <end position="42"/>
    </location>
</feature>
<feature type="helix" evidence="6">
    <location>
        <begin position="49"/>
        <end position="51"/>
    </location>
</feature>
<feature type="helix" evidence="6">
    <location>
        <begin position="88"/>
        <end position="98"/>
    </location>
</feature>
<feature type="helix" evidence="6">
    <location>
        <begin position="100"/>
        <end position="105"/>
    </location>
</feature>
<feature type="strand" evidence="6">
    <location>
        <begin position="114"/>
        <end position="119"/>
    </location>
</feature>
<feature type="strand" evidence="6">
    <location>
        <begin position="129"/>
        <end position="135"/>
    </location>
</feature>
<feature type="turn" evidence="6">
    <location>
        <begin position="139"/>
        <end position="141"/>
    </location>
</feature>
<feature type="helix" evidence="6">
    <location>
        <begin position="145"/>
        <end position="147"/>
    </location>
</feature>
<feature type="helix" evidence="6">
    <location>
        <begin position="151"/>
        <end position="159"/>
    </location>
</feature>
<feature type="strand" evidence="6">
    <location>
        <begin position="165"/>
        <end position="169"/>
    </location>
</feature>
<feature type="helix" evidence="6">
    <location>
        <begin position="174"/>
        <end position="178"/>
    </location>
</feature>
<feature type="helix" evidence="6">
    <location>
        <begin position="182"/>
        <end position="187"/>
    </location>
</feature>
<feature type="helix" evidence="6">
    <location>
        <begin position="192"/>
        <end position="207"/>
    </location>
</feature>
<feature type="helix" evidence="6">
    <location>
        <begin position="208"/>
        <end position="211"/>
    </location>
</feature>
<feature type="strand" evidence="6">
    <location>
        <begin position="213"/>
        <end position="223"/>
    </location>
</feature>
<feature type="helix" evidence="6">
    <location>
        <begin position="225"/>
        <end position="235"/>
    </location>
</feature>
<feature type="helix" evidence="6">
    <location>
        <begin position="236"/>
        <end position="239"/>
    </location>
</feature>
<feature type="strand" evidence="6">
    <location>
        <begin position="246"/>
        <end position="248"/>
    </location>
</feature>
<feature type="strand" evidence="6">
    <location>
        <begin position="250"/>
        <end position="256"/>
    </location>
</feature>
<feature type="helix" evidence="6">
    <location>
        <begin position="268"/>
        <end position="281"/>
    </location>
</feature>
<feature type="helix" evidence="6">
    <location>
        <begin position="289"/>
        <end position="294"/>
    </location>
</feature>
<feature type="helix" evidence="6">
    <location>
        <begin position="298"/>
        <end position="305"/>
    </location>
</feature>
<feature type="turn" evidence="6">
    <location>
        <begin position="314"/>
        <end position="317"/>
    </location>
</feature>
<feature type="strand" evidence="6">
    <location>
        <begin position="327"/>
        <end position="330"/>
    </location>
</feature>
<feature type="helix" evidence="6">
    <location>
        <begin position="334"/>
        <end position="339"/>
    </location>
</feature>
<feature type="strand" evidence="6">
    <location>
        <begin position="348"/>
        <end position="353"/>
    </location>
</feature>
<feature type="helix" evidence="6">
    <location>
        <begin position="356"/>
        <end position="358"/>
    </location>
</feature>
<feature type="helix" evidence="6">
    <location>
        <begin position="360"/>
        <end position="364"/>
    </location>
</feature>
<feature type="helix" evidence="6">
    <location>
        <begin position="370"/>
        <end position="380"/>
    </location>
</feature>
<feature type="helix" evidence="6">
    <location>
        <begin position="386"/>
        <end position="395"/>
    </location>
</feature>
<feature type="turn" evidence="6">
    <location>
        <begin position="400"/>
        <end position="402"/>
    </location>
</feature>
<feature type="strand" evidence="6">
    <location>
        <begin position="403"/>
        <end position="405"/>
    </location>
</feature>
<feature type="turn" evidence="6">
    <location>
        <begin position="409"/>
        <end position="412"/>
    </location>
</feature>
<feature type="strand" evidence="6">
    <location>
        <begin position="413"/>
        <end position="417"/>
    </location>
</feature>
<feature type="helix" evidence="6">
    <location>
        <begin position="418"/>
        <end position="429"/>
    </location>
</feature>
<feature type="helix" evidence="6">
    <location>
        <begin position="431"/>
        <end position="440"/>
    </location>
</feature>
<feature type="strand" evidence="6">
    <location>
        <begin position="446"/>
        <end position="451"/>
    </location>
</feature>
<feature type="turn" evidence="6">
    <location>
        <begin position="453"/>
        <end position="456"/>
    </location>
</feature>
<feature type="turn" evidence="6">
    <location>
        <begin position="458"/>
        <end position="460"/>
    </location>
</feature>
<feature type="strand" evidence="6">
    <location>
        <begin position="461"/>
        <end position="463"/>
    </location>
</feature>
<feature type="helix" evidence="6">
    <location>
        <begin position="466"/>
        <end position="472"/>
    </location>
</feature>
<feature type="helix" evidence="6">
    <location>
        <begin position="479"/>
        <end position="482"/>
    </location>
</feature>
<feature type="helix" evidence="6">
    <location>
        <begin position="484"/>
        <end position="492"/>
    </location>
</feature>
<feature type="helix" evidence="6">
    <location>
        <begin position="495"/>
        <end position="498"/>
    </location>
</feature>
<feature type="strand" evidence="6">
    <location>
        <begin position="517"/>
        <end position="520"/>
    </location>
</feature>
<feature type="strand" evidence="6">
    <location>
        <begin position="525"/>
        <end position="528"/>
    </location>
</feature>
<feature type="helix" evidence="6">
    <location>
        <begin position="534"/>
        <end position="541"/>
    </location>
</feature>
<feature type="helix" evidence="6">
    <location>
        <begin position="544"/>
        <end position="547"/>
    </location>
</feature>
<organism>
    <name type="scientific">Diutina rugosa</name>
    <name type="common">Yeast</name>
    <name type="synonym">Candida rugosa</name>
    <dbReference type="NCBI Taxonomy" id="5481"/>
    <lineage>
        <taxon>Eukaryota</taxon>
        <taxon>Fungi</taxon>
        <taxon>Dikarya</taxon>
        <taxon>Ascomycota</taxon>
        <taxon>Saccharomycotina</taxon>
        <taxon>Pichiomycetes</taxon>
        <taxon>Debaryomycetaceae</taxon>
        <taxon>Diutina</taxon>
    </lineage>
</organism>